<sequence length="317" mass="35103">MTTQLDALRNMTVVVADTGDIDAIKKYQPQDATTNPSLILSASSLPQYAPLIDEAIAYAKAKSADKTQQLIDAEDKLAVNIGLEILKIVPGRISTEVDARLSYDTQATVEKARKLIALYNEAGISNDRILIKIASTWQGIRAAEILEKEGINCNLTLLFSKAQARACAEAGVYLISPFVGRILDWYKANSDKKEYAPAEDPGVISVTKIYNYYKQYGYNTVVMGASFRNVGEITELAGCDRLTIAPALLKELQENSTALVRKLAFKGEVKAKPQPLTESQFYWQHNSDPMAVEKLADGIRKFAIDQEKLEKMLLEKF</sequence>
<comment type="function">
    <text evidence="2">Transaldolase is important for the balance of metabolites in the pentose-phosphate pathway.</text>
</comment>
<comment type="catalytic activity">
    <reaction evidence="2">
        <text>D-sedoheptulose 7-phosphate + D-glyceraldehyde 3-phosphate = D-erythrose 4-phosphate + beta-D-fructose 6-phosphate</text>
        <dbReference type="Rhea" id="RHEA:17053"/>
        <dbReference type="ChEBI" id="CHEBI:16897"/>
        <dbReference type="ChEBI" id="CHEBI:57483"/>
        <dbReference type="ChEBI" id="CHEBI:57634"/>
        <dbReference type="ChEBI" id="CHEBI:59776"/>
        <dbReference type="EC" id="2.2.1.2"/>
    </reaction>
</comment>
<comment type="pathway">
    <text evidence="2">Carbohydrate degradation; pentose phosphate pathway; D-glyceraldehyde 3-phosphate and beta-D-fructose 6-phosphate from D-ribose 5-phosphate and D-xylulose 5-phosphate (non-oxidative stage): step 2/3.</text>
</comment>
<comment type="subunit">
    <text evidence="1">Homodimer.</text>
</comment>
<comment type="subcellular location">
    <subcellularLocation>
        <location evidence="2">Cytoplasm</location>
    </subcellularLocation>
</comment>
<comment type="similarity">
    <text evidence="2">Belongs to the transaldolase family. Type 1 subfamily.</text>
</comment>
<gene>
    <name evidence="2" type="primary">tal</name>
    <name type="ordered locus">HSM_0072</name>
</gene>
<protein>
    <recommendedName>
        <fullName evidence="2">Transaldolase</fullName>
        <ecNumber evidence="2">2.2.1.2</ecNumber>
    </recommendedName>
</protein>
<organism>
    <name type="scientific">Histophilus somni (strain 2336)</name>
    <name type="common">Haemophilus somnus</name>
    <dbReference type="NCBI Taxonomy" id="228400"/>
    <lineage>
        <taxon>Bacteria</taxon>
        <taxon>Pseudomonadati</taxon>
        <taxon>Pseudomonadota</taxon>
        <taxon>Gammaproteobacteria</taxon>
        <taxon>Pasteurellales</taxon>
        <taxon>Pasteurellaceae</taxon>
        <taxon>Histophilus</taxon>
    </lineage>
</organism>
<proteinExistence type="inferred from homology"/>
<name>TAL_HISS2</name>
<keyword id="KW-0963">Cytoplasm</keyword>
<keyword id="KW-0570">Pentose shunt</keyword>
<keyword id="KW-0704">Schiff base</keyword>
<keyword id="KW-0808">Transferase</keyword>
<evidence type="ECO:0000250" key="1"/>
<evidence type="ECO:0000255" key="2">
    <source>
        <dbReference type="HAMAP-Rule" id="MF_00492"/>
    </source>
</evidence>
<feature type="chain" id="PRO_1000081395" description="Transaldolase">
    <location>
        <begin position="1"/>
        <end position="317"/>
    </location>
</feature>
<feature type="active site" description="Schiff-base intermediate with substrate" evidence="2">
    <location>
        <position position="132"/>
    </location>
</feature>
<reference key="1">
    <citation type="submission" date="2008-02" db="EMBL/GenBank/DDBJ databases">
        <title>Complete sequence of Haemophilus somnus 2336.</title>
        <authorList>
            <consortium name="US DOE Joint Genome Institute"/>
            <person name="Siddaramappa S."/>
            <person name="Duncan A.J."/>
            <person name="Challacombe J.F."/>
            <person name="Rainey D."/>
            <person name="Gillaspy A.F."/>
            <person name="Carson M."/>
            <person name="Gipson J."/>
            <person name="Gipson M."/>
            <person name="Bruce D."/>
            <person name="Detter J.C."/>
            <person name="Han C.S."/>
            <person name="Land M."/>
            <person name="Tapia R."/>
            <person name="Thompson L.S."/>
            <person name="Orvis J."/>
            <person name="Zaitshik J."/>
            <person name="Barnes G."/>
            <person name="Brettin T.S."/>
            <person name="Dyer D.W."/>
            <person name="Inzana T.J."/>
        </authorList>
    </citation>
    <scope>NUCLEOTIDE SEQUENCE [LARGE SCALE GENOMIC DNA]</scope>
    <source>
        <strain>2336</strain>
    </source>
</reference>
<dbReference type="EC" id="2.2.1.2" evidence="2"/>
<dbReference type="EMBL" id="CP000947">
    <property type="protein sequence ID" value="ACA32385.1"/>
    <property type="molecule type" value="Genomic_DNA"/>
</dbReference>
<dbReference type="RefSeq" id="WP_012341545.1">
    <property type="nucleotide sequence ID" value="NC_010519.1"/>
</dbReference>
<dbReference type="SMR" id="B0UV30"/>
<dbReference type="STRING" id="228400.HSM_0072"/>
<dbReference type="GeneID" id="31486350"/>
<dbReference type="KEGG" id="hsm:HSM_0072"/>
<dbReference type="HOGENOM" id="CLU_047470_0_1_6"/>
<dbReference type="UniPathway" id="UPA00115">
    <property type="reaction ID" value="UER00414"/>
</dbReference>
<dbReference type="GO" id="GO:0005829">
    <property type="term" value="C:cytosol"/>
    <property type="evidence" value="ECO:0007669"/>
    <property type="project" value="TreeGrafter"/>
</dbReference>
<dbReference type="GO" id="GO:0004801">
    <property type="term" value="F:transaldolase activity"/>
    <property type="evidence" value="ECO:0000250"/>
    <property type="project" value="UniProtKB"/>
</dbReference>
<dbReference type="GO" id="GO:0005975">
    <property type="term" value="P:carbohydrate metabolic process"/>
    <property type="evidence" value="ECO:0007669"/>
    <property type="project" value="InterPro"/>
</dbReference>
<dbReference type="GO" id="GO:0006098">
    <property type="term" value="P:pentose-phosphate shunt"/>
    <property type="evidence" value="ECO:0007669"/>
    <property type="project" value="UniProtKB-UniRule"/>
</dbReference>
<dbReference type="CDD" id="cd00957">
    <property type="entry name" value="Transaldolase_TalAB"/>
    <property type="match status" value="1"/>
</dbReference>
<dbReference type="FunFam" id="3.20.20.70:FF:000002">
    <property type="entry name" value="Transaldolase"/>
    <property type="match status" value="1"/>
</dbReference>
<dbReference type="Gene3D" id="3.20.20.70">
    <property type="entry name" value="Aldolase class I"/>
    <property type="match status" value="1"/>
</dbReference>
<dbReference type="HAMAP" id="MF_00492">
    <property type="entry name" value="Transaldolase_1"/>
    <property type="match status" value="1"/>
</dbReference>
<dbReference type="InterPro" id="IPR013785">
    <property type="entry name" value="Aldolase_TIM"/>
</dbReference>
<dbReference type="InterPro" id="IPR001585">
    <property type="entry name" value="TAL/FSA"/>
</dbReference>
<dbReference type="InterPro" id="IPR004730">
    <property type="entry name" value="Transaldolase_1"/>
</dbReference>
<dbReference type="InterPro" id="IPR018225">
    <property type="entry name" value="Transaldolase_AS"/>
</dbReference>
<dbReference type="NCBIfam" id="NF009001">
    <property type="entry name" value="PRK12346.1"/>
    <property type="match status" value="1"/>
</dbReference>
<dbReference type="NCBIfam" id="TIGR00874">
    <property type="entry name" value="talAB"/>
    <property type="match status" value="1"/>
</dbReference>
<dbReference type="PANTHER" id="PTHR10683">
    <property type="entry name" value="TRANSALDOLASE"/>
    <property type="match status" value="1"/>
</dbReference>
<dbReference type="PANTHER" id="PTHR10683:SF18">
    <property type="entry name" value="TRANSALDOLASE"/>
    <property type="match status" value="1"/>
</dbReference>
<dbReference type="Pfam" id="PF00923">
    <property type="entry name" value="TAL_FSA"/>
    <property type="match status" value="1"/>
</dbReference>
<dbReference type="SUPFAM" id="SSF51569">
    <property type="entry name" value="Aldolase"/>
    <property type="match status" value="1"/>
</dbReference>
<dbReference type="PROSITE" id="PS01054">
    <property type="entry name" value="TRANSALDOLASE_1"/>
    <property type="match status" value="1"/>
</dbReference>
<dbReference type="PROSITE" id="PS00958">
    <property type="entry name" value="TRANSALDOLASE_2"/>
    <property type="match status" value="1"/>
</dbReference>
<accession>B0UV30</accession>